<keyword id="KW-0256">Endoplasmic reticulum</keyword>
<keyword id="KW-0472">Membrane</keyword>
<keyword id="KW-1185">Reference proteome</keyword>
<keyword id="KW-0812">Transmembrane</keyword>
<keyword id="KW-1133">Transmembrane helix</keyword>
<organism>
    <name type="scientific">Xenopus tropicalis</name>
    <name type="common">Western clawed frog</name>
    <name type="synonym">Silurana tropicalis</name>
    <dbReference type="NCBI Taxonomy" id="8364"/>
    <lineage>
        <taxon>Eukaryota</taxon>
        <taxon>Metazoa</taxon>
        <taxon>Chordata</taxon>
        <taxon>Craniata</taxon>
        <taxon>Vertebrata</taxon>
        <taxon>Euteleostomi</taxon>
        <taxon>Amphibia</taxon>
        <taxon>Batrachia</taxon>
        <taxon>Anura</taxon>
        <taxon>Pipoidea</taxon>
        <taxon>Pipidae</taxon>
        <taxon>Xenopodinae</taxon>
        <taxon>Xenopus</taxon>
        <taxon>Silurana</taxon>
    </lineage>
</organism>
<comment type="function">
    <text evidence="1 2">Component of the signal peptidase complex (SPC) which catalyzes the cleavage of N-terminal signal sequences from nascent proteins as they are translocated into the lumen of the endoplasmic reticulum (By similarity). Enhances the enzymatic activity of SPC and facilitates the interactions between different components of the translocation site (By similarity).</text>
</comment>
<comment type="subunit">
    <text evidence="2">Component of the signal peptidase complex paralog A (SPC-A) composed of a catalytic subunit sec11a and three accessory subunits spcs1, spcs2 and spcs3. Component of the signal peptidase complex paralog C (SPC-C) composed of a catalytic subunit sec11c and three accessory subunits spcs1, spcs2 and spcs3. The complex induces a local thinning of the ER membrane which is used to measure the length of the signal peptide (SP) h-region of protein substrates. This ensures the selectivity of the complex towards h-regions shorter than 18-20 amino acids.</text>
</comment>
<comment type="subcellular location">
    <subcellularLocation>
        <location evidence="3">Endoplasmic reticulum membrane</location>
        <topology evidence="3">Multi-pass membrane protein</topology>
    </subcellularLocation>
</comment>
<comment type="similarity">
    <text evidence="5">Belongs to the SPCS2 family.</text>
</comment>
<protein>
    <recommendedName>
        <fullName>Signal peptidase complex subunit 2</fullName>
    </recommendedName>
    <alternativeName>
        <fullName>Microsomal signal peptidase 25 kDa subunit</fullName>
        <shortName>SPase 25 kDa subunit</shortName>
    </alternativeName>
</protein>
<accession>Q5M8Y1</accession>
<evidence type="ECO:0000250" key="1">
    <source>
        <dbReference type="UniProtKB" id="Q04969"/>
    </source>
</evidence>
<evidence type="ECO:0000250" key="2">
    <source>
        <dbReference type="UniProtKB" id="Q15005"/>
    </source>
</evidence>
<evidence type="ECO:0000250" key="3">
    <source>
        <dbReference type="UniProtKB" id="Q28250"/>
    </source>
</evidence>
<evidence type="ECO:0000255" key="4"/>
<evidence type="ECO:0000305" key="5"/>
<feature type="chain" id="PRO_0000221163" description="Signal peptidase complex subunit 2">
    <location>
        <begin position="1"/>
        <end position="201"/>
    </location>
</feature>
<feature type="topological domain" description="Cytoplasmic" evidence="3">
    <location>
        <begin position="1"/>
        <end position="59"/>
    </location>
</feature>
<feature type="transmembrane region" description="Helical" evidence="4">
    <location>
        <begin position="60"/>
        <end position="80"/>
    </location>
</feature>
<feature type="topological domain" description="Lumenal" evidence="3">
    <location>
        <begin position="81"/>
        <end position="86"/>
    </location>
</feature>
<feature type="transmembrane region" description="Helical" evidence="4">
    <location>
        <begin position="87"/>
        <end position="107"/>
    </location>
</feature>
<feature type="topological domain" description="Cytoplasmic" evidence="3">
    <location>
        <begin position="108"/>
        <end position="201"/>
    </location>
</feature>
<reference key="1">
    <citation type="submission" date="2004-12" db="EMBL/GenBank/DDBJ databases">
        <authorList>
            <consortium name="NIH - Xenopus Gene Collection (XGC) project"/>
        </authorList>
    </citation>
    <scope>NUCLEOTIDE SEQUENCE [LARGE SCALE MRNA]</scope>
</reference>
<dbReference type="EMBL" id="BC087786">
    <property type="protein sequence ID" value="AAH87786.1"/>
    <property type="molecule type" value="mRNA"/>
</dbReference>
<dbReference type="RefSeq" id="NP_001011222.1">
    <property type="nucleotide sequence ID" value="NM_001011222.1"/>
</dbReference>
<dbReference type="SMR" id="Q5M8Y1"/>
<dbReference type="FunCoup" id="Q5M8Y1">
    <property type="interactions" value="2254"/>
</dbReference>
<dbReference type="PaxDb" id="8364-ENSXETP00000054148"/>
<dbReference type="GeneID" id="496658"/>
<dbReference type="KEGG" id="xtr:496658"/>
<dbReference type="AGR" id="Xenbase:XB-GENE-5826459"/>
<dbReference type="CTD" id="9789"/>
<dbReference type="Xenbase" id="XB-GENE-5826459">
    <property type="gene designation" value="spcs2"/>
</dbReference>
<dbReference type="eggNOG" id="KOG4072">
    <property type="taxonomic scope" value="Eukaryota"/>
</dbReference>
<dbReference type="InParanoid" id="Q5M8Y1"/>
<dbReference type="OMA" id="INKWDGT"/>
<dbReference type="OrthoDB" id="29558at2759"/>
<dbReference type="Proteomes" id="UP000008143">
    <property type="component" value="Chromosome 2"/>
</dbReference>
<dbReference type="Bgee" id="ENSXETG00000040068">
    <property type="expression patterns" value="Expressed in neurula embryo and 12 other cell types or tissues"/>
</dbReference>
<dbReference type="GO" id="GO:0005787">
    <property type="term" value="C:signal peptidase complex"/>
    <property type="evidence" value="ECO:0007669"/>
    <property type="project" value="InterPro"/>
</dbReference>
<dbReference type="GO" id="GO:0006465">
    <property type="term" value="P:signal peptide processing"/>
    <property type="evidence" value="ECO:0007669"/>
    <property type="project" value="InterPro"/>
</dbReference>
<dbReference type="InterPro" id="IPR009582">
    <property type="entry name" value="Spc2/SPCS2"/>
</dbReference>
<dbReference type="PANTHER" id="PTHR13085">
    <property type="entry name" value="MICROSOMAL SIGNAL PEPTIDASE 25 KDA SUBUNIT"/>
    <property type="match status" value="1"/>
</dbReference>
<dbReference type="PANTHER" id="PTHR13085:SF0">
    <property type="entry name" value="SIGNAL PEPTIDASE COMPLEX SUBUNIT 2"/>
    <property type="match status" value="1"/>
</dbReference>
<dbReference type="Pfam" id="PF06703">
    <property type="entry name" value="SPC25"/>
    <property type="match status" value="1"/>
</dbReference>
<sequence length="201" mass="22958">MAARGGKNGLLEKWKIDDKPVKIDKWDGSAVKNSLDDAAKKVLLEKYRYVENFCLIDGRLIICTISCVFAIVALVWDYLHPFPESKPVLAICVISYFLMMGILTIYTSYKEKSIFLVAHRKDPAGMDPDDIWHLSSSLKRFDDKYTLKVTYISGKTKAQRDAEFTKSIARFFDDNGTLVMDLFEPEVSKLHDSLAMEKKTK</sequence>
<proteinExistence type="evidence at transcript level"/>
<name>SPCS2_XENTR</name>
<gene>
    <name type="primary">spcs2</name>
</gene>